<dbReference type="EC" id="2.7.1.199" evidence="1"/>
<dbReference type="EMBL" id="CP000046">
    <property type="protein sequence ID" value="AAW37471.1"/>
    <property type="molecule type" value="Genomic_DNA"/>
</dbReference>
<dbReference type="RefSeq" id="WP_001227724.1">
    <property type="nucleotide sequence ID" value="NZ_JBGOFO010000001.1"/>
</dbReference>
<dbReference type="SMR" id="Q5HJI3"/>
<dbReference type="KEGG" id="sac:SACOL0175"/>
<dbReference type="HOGENOM" id="CLU_012312_1_1_9"/>
<dbReference type="Proteomes" id="UP000000530">
    <property type="component" value="Chromosome"/>
</dbReference>
<dbReference type="GO" id="GO:0005886">
    <property type="term" value="C:plasma membrane"/>
    <property type="evidence" value="ECO:0007669"/>
    <property type="project" value="UniProtKB-SubCell"/>
</dbReference>
<dbReference type="GO" id="GO:0055056">
    <property type="term" value="F:D-glucose transmembrane transporter activity"/>
    <property type="evidence" value="ECO:0007669"/>
    <property type="project" value="InterPro"/>
</dbReference>
<dbReference type="GO" id="GO:0016301">
    <property type="term" value="F:kinase activity"/>
    <property type="evidence" value="ECO:0007669"/>
    <property type="project" value="UniProtKB-KW"/>
</dbReference>
<dbReference type="GO" id="GO:0008982">
    <property type="term" value="F:protein-N(PI)-phosphohistidine-sugar phosphotransferase activity"/>
    <property type="evidence" value="ECO:0007669"/>
    <property type="project" value="InterPro"/>
</dbReference>
<dbReference type="GO" id="GO:0090563">
    <property type="term" value="F:protein-phosphocysteine-sugar phosphotransferase activity"/>
    <property type="evidence" value="ECO:0007669"/>
    <property type="project" value="TreeGrafter"/>
</dbReference>
<dbReference type="GO" id="GO:1904659">
    <property type="term" value="P:D-glucose transmembrane transport"/>
    <property type="evidence" value="ECO:0007669"/>
    <property type="project" value="InterPro"/>
</dbReference>
<dbReference type="GO" id="GO:0009401">
    <property type="term" value="P:phosphoenolpyruvate-dependent sugar phosphotransferase system"/>
    <property type="evidence" value="ECO:0007669"/>
    <property type="project" value="UniProtKB-KW"/>
</dbReference>
<dbReference type="CDD" id="cd00210">
    <property type="entry name" value="PTS_IIA_glc"/>
    <property type="match status" value="1"/>
</dbReference>
<dbReference type="CDD" id="cd00212">
    <property type="entry name" value="PTS_IIB_glc"/>
    <property type="match status" value="1"/>
</dbReference>
<dbReference type="FunFam" id="2.70.70.10:FF:000001">
    <property type="entry name" value="PTS system glucose-specific IIA component"/>
    <property type="match status" value="1"/>
</dbReference>
<dbReference type="FunFam" id="3.30.1360.60:FF:000001">
    <property type="entry name" value="PTS system glucose-specific IIBC component PtsG"/>
    <property type="match status" value="1"/>
</dbReference>
<dbReference type="Gene3D" id="2.70.70.10">
    <property type="entry name" value="Glucose Permease (Domain IIA)"/>
    <property type="match status" value="1"/>
</dbReference>
<dbReference type="Gene3D" id="3.30.1360.60">
    <property type="entry name" value="Glucose permease domain IIB"/>
    <property type="match status" value="1"/>
</dbReference>
<dbReference type="InterPro" id="IPR011055">
    <property type="entry name" value="Dup_hybrid_motif"/>
</dbReference>
<dbReference type="InterPro" id="IPR036878">
    <property type="entry name" value="Glu_permease_IIB"/>
</dbReference>
<dbReference type="InterPro" id="IPR018113">
    <property type="entry name" value="PTrfase_EIIB_Cys"/>
</dbReference>
<dbReference type="InterPro" id="IPR001127">
    <property type="entry name" value="PTS_EIIA_1_perm"/>
</dbReference>
<dbReference type="InterPro" id="IPR003352">
    <property type="entry name" value="PTS_EIIC"/>
</dbReference>
<dbReference type="InterPro" id="IPR013013">
    <property type="entry name" value="PTS_EIIC_1"/>
</dbReference>
<dbReference type="InterPro" id="IPR050429">
    <property type="entry name" value="PTS_Glucose_EIICBA"/>
</dbReference>
<dbReference type="InterPro" id="IPR001996">
    <property type="entry name" value="PTS_IIB_1"/>
</dbReference>
<dbReference type="InterPro" id="IPR011299">
    <property type="entry name" value="PTS_IIBC_glc"/>
</dbReference>
<dbReference type="NCBIfam" id="TIGR00826">
    <property type="entry name" value="EIIB_glc"/>
    <property type="match status" value="1"/>
</dbReference>
<dbReference type="NCBIfam" id="TIGR00830">
    <property type="entry name" value="PTBA"/>
    <property type="match status" value="1"/>
</dbReference>
<dbReference type="NCBIfam" id="TIGR02002">
    <property type="entry name" value="PTS-II-BC-glcB"/>
    <property type="match status" value="1"/>
</dbReference>
<dbReference type="PANTHER" id="PTHR30009">
    <property type="entry name" value="CYTOCHROME C-TYPE SYNTHESIS PROTEIN AND PTS TRANSMEMBRANE COMPONENT"/>
    <property type="match status" value="1"/>
</dbReference>
<dbReference type="PANTHER" id="PTHR30009:SF20">
    <property type="entry name" value="PTS SYSTEM GLUCOSE-SPECIFIC EIICB COMPONENT-RELATED"/>
    <property type="match status" value="1"/>
</dbReference>
<dbReference type="Pfam" id="PF00358">
    <property type="entry name" value="PTS_EIIA_1"/>
    <property type="match status" value="1"/>
</dbReference>
<dbReference type="Pfam" id="PF00367">
    <property type="entry name" value="PTS_EIIB"/>
    <property type="match status" value="1"/>
</dbReference>
<dbReference type="Pfam" id="PF02378">
    <property type="entry name" value="PTS_EIIC"/>
    <property type="match status" value="1"/>
</dbReference>
<dbReference type="SUPFAM" id="SSF51261">
    <property type="entry name" value="Duplicated hybrid motif"/>
    <property type="match status" value="1"/>
</dbReference>
<dbReference type="SUPFAM" id="SSF55604">
    <property type="entry name" value="Glucose permease domain IIB"/>
    <property type="match status" value="1"/>
</dbReference>
<dbReference type="PROSITE" id="PS51093">
    <property type="entry name" value="PTS_EIIA_TYPE_1"/>
    <property type="match status" value="1"/>
</dbReference>
<dbReference type="PROSITE" id="PS00371">
    <property type="entry name" value="PTS_EIIA_TYPE_1_HIS"/>
    <property type="match status" value="1"/>
</dbReference>
<dbReference type="PROSITE" id="PS51098">
    <property type="entry name" value="PTS_EIIB_TYPE_1"/>
    <property type="match status" value="1"/>
</dbReference>
<dbReference type="PROSITE" id="PS01035">
    <property type="entry name" value="PTS_EIIB_TYPE_1_CYS"/>
    <property type="match status" value="1"/>
</dbReference>
<dbReference type="PROSITE" id="PS51103">
    <property type="entry name" value="PTS_EIIC_TYPE_1"/>
    <property type="match status" value="1"/>
</dbReference>
<gene>
    <name type="primary">ptsG</name>
    <name type="synonym">glcA</name>
    <name type="ordered locus">SACOL0175</name>
</gene>
<accession>Q5HJI3</accession>
<organism>
    <name type="scientific">Staphylococcus aureus (strain COL)</name>
    <dbReference type="NCBI Taxonomy" id="93062"/>
    <lineage>
        <taxon>Bacteria</taxon>
        <taxon>Bacillati</taxon>
        <taxon>Bacillota</taxon>
        <taxon>Bacilli</taxon>
        <taxon>Bacillales</taxon>
        <taxon>Staphylococcaceae</taxon>
        <taxon>Staphylococcus</taxon>
    </lineage>
</organism>
<keyword id="KW-1003">Cell membrane</keyword>
<keyword id="KW-0418">Kinase</keyword>
<keyword id="KW-0472">Membrane</keyword>
<keyword id="KW-0598">Phosphotransferase system</keyword>
<keyword id="KW-0762">Sugar transport</keyword>
<keyword id="KW-0808">Transferase</keyword>
<keyword id="KW-0812">Transmembrane</keyword>
<keyword id="KW-1133">Transmembrane helix</keyword>
<keyword id="KW-0813">Transport</keyword>
<reference key="1">
    <citation type="journal article" date="2005" name="J. Bacteriol.">
        <title>Insights on evolution of virulence and resistance from the complete genome analysis of an early methicillin-resistant Staphylococcus aureus strain and a biofilm-producing methicillin-resistant Staphylococcus epidermidis strain.</title>
        <authorList>
            <person name="Gill S.R."/>
            <person name="Fouts D.E."/>
            <person name="Archer G.L."/>
            <person name="Mongodin E.F."/>
            <person name="DeBoy R.T."/>
            <person name="Ravel J."/>
            <person name="Paulsen I.T."/>
            <person name="Kolonay J.F."/>
            <person name="Brinkac L.M."/>
            <person name="Beanan M.J."/>
            <person name="Dodson R.J."/>
            <person name="Daugherty S.C."/>
            <person name="Madupu R."/>
            <person name="Angiuoli S.V."/>
            <person name="Durkin A.S."/>
            <person name="Haft D.H."/>
            <person name="Vamathevan J.J."/>
            <person name="Khouri H."/>
            <person name="Utterback T.R."/>
            <person name="Lee C."/>
            <person name="Dimitrov G."/>
            <person name="Jiang L."/>
            <person name="Qin H."/>
            <person name="Weidman J."/>
            <person name="Tran K."/>
            <person name="Kang K.H."/>
            <person name="Hance I.R."/>
            <person name="Nelson K.E."/>
            <person name="Fraser C.M."/>
        </authorList>
    </citation>
    <scope>NUCLEOTIDE SEQUENCE [LARGE SCALE GENOMIC DNA]</scope>
    <source>
        <strain>COL</strain>
    </source>
</reference>
<proteinExistence type="inferred from homology"/>
<comment type="function">
    <text evidence="1">The phosphoenolpyruvate-dependent sugar phosphotransferase system (sugar PTS), a major carbohydrate active transport system, catalyzes the phosphorylation of incoming sugar substrates concomitantly with their translocation across the cell membrane. This system is involved in glucose transport.</text>
</comment>
<comment type="catalytic activity">
    <reaction evidence="1">
        <text>N(pros)-phospho-L-histidyl-[protein] + D-glucose(out) = D-glucose 6-phosphate(in) + L-histidyl-[protein]</text>
        <dbReference type="Rhea" id="RHEA:33367"/>
        <dbReference type="Rhea" id="RHEA-COMP:9745"/>
        <dbReference type="Rhea" id="RHEA-COMP:9746"/>
        <dbReference type="ChEBI" id="CHEBI:4167"/>
        <dbReference type="ChEBI" id="CHEBI:29979"/>
        <dbReference type="ChEBI" id="CHEBI:61548"/>
        <dbReference type="ChEBI" id="CHEBI:64837"/>
        <dbReference type="EC" id="2.7.1.199"/>
    </reaction>
</comment>
<comment type="subcellular location">
    <subcellularLocation>
        <location evidence="4">Cell membrane</location>
        <topology evidence="4">Multi-pass membrane protein</topology>
    </subcellularLocation>
</comment>
<comment type="domain">
    <text evidence="4">The EIIC domain forms the PTS system translocation channel and contains the specific substrate-binding site.</text>
</comment>
<comment type="domain">
    <text evidence="3">The EIIB domain is phosphorylated by phospho-EIIA on a cysteinyl or histidyl residue, depending on the transported sugar. Then, it transfers the phosphoryl group to the sugar substrate concomitantly with the sugar uptake processed by the EIIC domain.</text>
</comment>
<comment type="domain">
    <text evidence="2">The EIIA domain is phosphorylated by phospho-HPr on a histidyl residue. Then, it transfers the phosphoryl group to the EIIB domain.</text>
</comment>
<protein>
    <recommendedName>
        <fullName evidence="1">PTS system glucose-specific EIICBA component</fullName>
        <ecNumber evidence="1">2.7.1.199</ecNumber>
    </recommendedName>
    <alternativeName>
        <fullName evidence="1">EIICBA-Glc</fullName>
        <shortName evidence="1">EII-Glc</shortName>
    </alternativeName>
    <alternativeName>
        <fullName evidence="5">EIICBA-Glc 1</fullName>
    </alternativeName>
    <domain>
        <recommendedName>
            <fullName evidence="1">Glucose permease IIC component</fullName>
        </recommendedName>
        <alternativeName>
            <fullName evidence="1">PTS system glucose-specific EIIC component</fullName>
        </alternativeName>
    </domain>
    <domain>
        <recommendedName>
            <fullName evidence="1">Glucose-specific phosphotransferase enzyme IIB component</fullName>
        </recommendedName>
        <alternativeName>
            <fullName evidence="1">PTS system glucose-specific EIIB component</fullName>
        </alternativeName>
    </domain>
    <domain>
        <recommendedName>
            <fullName evidence="1">Glucose-specific phosphotransferase enzyme IIA component</fullName>
        </recommendedName>
        <alternativeName>
            <fullName evidence="1">PTS system glucose-specific EIIA component</fullName>
        </alternativeName>
    </domain>
</protein>
<feature type="chain" id="PRO_0000351393" description="PTS system glucose-specific EIICBA component">
    <location>
        <begin position="1"/>
        <end position="681"/>
    </location>
</feature>
<feature type="transmembrane region" description="Helical" evidence="4">
    <location>
        <begin position="16"/>
        <end position="36"/>
    </location>
</feature>
<feature type="transmembrane region" description="Helical" evidence="4">
    <location>
        <begin position="73"/>
        <end position="93"/>
    </location>
</feature>
<feature type="transmembrane region" description="Helical" evidence="4">
    <location>
        <begin position="126"/>
        <end position="146"/>
    </location>
</feature>
<feature type="transmembrane region" description="Helical" evidence="4">
    <location>
        <begin position="170"/>
        <end position="190"/>
    </location>
</feature>
<feature type="transmembrane region" description="Helical" evidence="4">
    <location>
        <begin position="199"/>
        <end position="219"/>
    </location>
</feature>
<feature type="transmembrane region" description="Helical" evidence="4">
    <location>
        <begin position="273"/>
        <end position="293"/>
    </location>
</feature>
<feature type="transmembrane region" description="Helical" evidence="4">
    <location>
        <begin position="303"/>
        <end position="323"/>
    </location>
</feature>
<feature type="transmembrane region" description="Helical" evidence="4">
    <location>
        <begin position="328"/>
        <end position="348"/>
    </location>
</feature>
<feature type="transmembrane region" description="Helical" evidence="4">
    <location>
        <begin position="355"/>
        <end position="375"/>
    </location>
</feature>
<feature type="transmembrane region" description="Helical" evidence="4">
    <location>
        <begin position="383"/>
        <end position="403"/>
    </location>
</feature>
<feature type="domain" description="PTS EIIC type-1" evidence="4">
    <location>
        <begin position="3"/>
        <end position="414"/>
    </location>
</feature>
<feature type="domain" description="PTS EIIB type-1" evidence="3">
    <location>
        <begin position="425"/>
        <end position="506"/>
    </location>
</feature>
<feature type="domain" description="PTS EIIA type-1" evidence="2">
    <location>
        <begin position="551"/>
        <end position="655"/>
    </location>
</feature>
<feature type="active site" description="Phosphocysteine intermediate; for EIIB activity" evidence="3">
    <location>
        <position position="447"/>
    </location>
</feature>
<feature type="active site" description="Tele-phosphohistidine intermediate; for EIIA activity" evidence="2">
    <location>
        <position position="603"/>
    </location>
</feature>
<sequence>MRKKLFGQLQRIGKALMLPVAILPAAGLLLAIGTAMQGESLQHYLPFIQNGGVQTVAKLMTGAGGIIFDNLPMIFALGVAIGLAGGDGVAAIAAFVGYIIMNKTMGDFLQVTPKNIGDPASGYASILGIPTLQTGVFGGIIIGALAAWCYNKFYNINLPSYLGFFAGKRFVPIMMATTSFILAFPMALIWPTIQSGLNAFSTGLLDSNTGVAVFLFGFIKRLLIPFGLHHIFHAPFWFEFGSWKNAAGEIIHGDQRIFIEQIREGAHLTAGKFMQGEFPVMMFGLPAAALAIYHTAKPENKKVVAGLMGSAALTSFLTGITEPLEFSFLFVAPLLFFIHAVLDGLSFLTLYLLDLHLGYTFSGGFIDYFLLGILPNKTQWWLVIPVGLVYAVIYYFVFRFLIVKLKYKTPGREDKQSQAATASATELPYAVLEAMGGKANIKHLDACITRLRVEVNDKSKVDVPGLKDLGASGVLEVGNNMQAIFGPKSDQIKHEMQQIMNGQVVENPTTMEDDKDETVVVAEDKSATSELSHIVHAPLTGEVTPLSEVPDQVFSEKMMGDGIAIKPSQGEVRAPFNGKVQMIFPTKHAIGLVSDSGLELLIHIGLDTVKLNGEGFTLHVEEGQEVKQGDLLINFDLDYIRNHAKSDITPIIVTQGNITNLDFKQGEHGNISFGDQLFEAK</sequence>
<evidence type="ECO:0000250" key="1">
    <source>
        <dbReference type="UniProtKB" id="Q57071"/>
    </source>
</evidence>
<evidence type="ECO:0000255" key="2">
    <source>
        <dbReference type="PROSITE-ProRule" id="PRU00416"/>
    </source>
</evidence>
<evidence type="ECO:0000255" key="3">
    <source>
        <dbReference type="PROSITE-ProRule" id="PRU00421"/>
    </source>
</evidence>
<evidence type="ECO:0000255" key="4">
    <source>
        <dbReference type="PROSITE-ProRule" id="PRU00426"/>
    </source>
</evidence>
<evidence type="ECO:0000305" key="5"/>
<name>PTG3C_STAAC</name>